<keyword id="KW-0227">DNA damage</keyword>
<keyword id="KW-1017">Isopeptide bond</keyword>
<keyword id="KW-0479">Metal-binding</keyword>
<keyword id="KW-0539">Nucleus</keyword>
<keyword id="KW-0597">Phosphoprotein</keyword>
<keyword id="KW-1185">Reference proteome</keyword>
<keyword id="KW-0808">Transferase</keyword>
<keyword id="KW-0832">Ubl conjugation</keyword>
<keyword id="KW-0833">Ubl conjugation pathway</keyword>
<keyword id="KW-0862">Zinc</keyword>
<keyword id="KW-0863">Zinc-finger</keyword>
<proteinExistence type="evidence at protein level"/>
<evidence type="ECO:0000250" key="1"/>
<evidence type="ECO:0000250" key="2">
    <source>
        <dbReference type="UniProtKB" id="Q9NS56"/>
    </source>
</evidence>
<evidence type="ECO:0000255" key="3">
    <source>
        <dbReference type="PROSITE-ProRule" id="PRU00175"/>
    </source>
</evidence>
<evidence type="ECO:0000256" key="4">
    <source>
        <dbReference type="SAM" id="MobiDB-lite"/>
    </source>
</evidence>
<evidence type="ECO:0000269" key="5">
    <source>
    </source>
</evidence>
<evidence type="ECO:0000269" key="6">
    <source>
    </source>
</evidence>
<evidence type="ECO:0000305" key="7"/>
<evidence type="ECO:0007744" key="8">
    <source>
    </source>
</evidence>
<evidence type="ECO:0007744" key="9">
    <source>
    </source>
</evidence>
<name>TOPRS_MOUSE</name>
<sequence length="1033" mass="117082">MGSQPPPPGSPLSREEGEAPPLVPAEEGRRRSRRVRLRGSCRHRPSLLSRRELASNGPAVPATASSEIMASAAKEFKMDNFSPKAGTSKLQQTVPADASPDSKCPICLDRFDNVSYLDRCLHKFCFRCVQEWSKNKAECPLCKQPFDSIFHSVRAEDDFKEYVLRPSYNGSFTNPEVRRFRYRTTMTRERSASLYSPSSTVSRRTTTPPDSGVLFEGLGISTRPRDVDIPQFMRQMALRGPTTTDERSLRKIQEQDIINFRRTLYRAGVRVRSIEDGGRYRDISAEFFRRNPACLHRLVPWLKRELTVLFGAHGSLVNIVQHIIMSNVTRYDLESQAFVSDLRPFLLNRTEHFIHEFISFARSPFNMAAFDQHANYDCPPSSEEGSRSDSSVITISPDEAETQELDMNASTVRQAPWDDETPGPSYSSSEQVHVGVSSLLNSSDSSDEELVSGGTTSQIQGVQTNDDVNNDSDSSSDNCVIVGFVKPLAERTPELVELSSDSEELGPYEKVETVKTQEQEQSYSSGDSDVSRASSPRSVLGKDEQMSKSHCDSDTRISSKKEEKRSTSLPAPRDSSSTRGDRVCSPYNHRHRKGGRSRSSDSRSQSRSGHDPRNHRKHGKKRLRNKRSRSRESSSRPRARKDKKRSRTRDSSWSRRSQTLSLSSGSTSRSRSRSSDHGKRRSRSRNRDRYYLRNNYGSKYKWEYTYYSRNKDRDGYESSYRRRTLSRAHYSRQSSSPEFRIQSFSERTNARKKNHSERKYYYYERRRSRSVSSNRSRTTSAGPDRVRNEKPGGKRKYKTRHLEGTSEEAQPAREFTSKGKDSHYQKSKLDGSYKNESDSFSDSRSSDRETKHKRRRRRTRSLSVEIVYEGKATDTSKHHKKKKKKHKKKHKKHHGDNTSRSPVVITIDSDSDGESEVKAGIECSNGSLPQPIQDGAFETKDVVTIEDELGVLDKDCDVTALADDLSTSQTVENCDSPAVPVEQTLDVREESTFASDLESQSSNVSIQAEPSRPVPSPRTSLSSVSPGRDCDVS</sequence>
<feature type="chain" id="PRO_0000232627" description="E3 ubiquitin-protein ligase Topors">
    <location>
        <begin position="1"/>
        <end position="1033"/>
    </location>
</feature>
<feature type="zinc finger region" description="RING-type" evidence="3">
    <location>
        <begin position="104"/>
        <end position="143"/>
    </location>
</feature>
<feature type="region of interest" description="Disordered" evidence="4">
    <location>
        <begin position="1"/>
        <end position="36"/>
    </location>
</feature>
<feature type="region of interest" description="Required for DNA-binding" evidence="1">
    <location>
        <begin position="52"/>
        <end position="376"/>
    </location>
</feature>
<feature type="region of interest" description="Disordered" evidence="4">
    <location>
        <begin position="414"/>
        <end position="477"/>
    </location>
</feature>
<feature type="region of interest" description="Interaction with SUMO1" evidence="1">
    <location>
        <begin position="438"/>
        <end position="654"/>
    </location>
</feature>
<feature type="region of interest" description="Sumoylation and localization to discrete nuclear foci" evidence="1">
    <location>
        <begin position="438"/>
        <end position="574"/>
    </location>
</feature>
<feature type="region of interest" description="Interaction with TOP1" evidence="1">
    <location>
        <begin position="457"/>
        <end position="879"/>
    </location>
</feature>
<feature type="region of interest" description="Interaction with p53/TP53" evidence="1">
    <location>
        <begin position="457"/>
        <end position="731"/>
    </location>
</feature>
<feature type="region of interest" description="Disordered" evidence="4">
    <location>
        <begin position="496"/>
        <end position="692"/>
    </location>
</feature>
<feature type="region of interest" description="Disordered" evidence="4">
    <location>
        <begin position="713"/>
        <end position="934"/>
    </location>
</feature>
<feature type="region of interest" description="Interaction with UBE2I" evidence="1">
    <location>
        <begin position="851"/>
        <end position="914"/>
    </location>
</feature>
<feature type="region of interest" description="Disordered" evidence="4">
    <location>
        <begin position="970"/>
        <end position="1033"/>
    </location>
</feature>
<feature type="compositionally biased region" description="Pro residues" evidence="4">
    <location>
        <begin position="1"/>
        <end position="10"/>
    </location>
</feature>
<feature type="compositionally biased region" description="Low complexity" evidence="4">
    <location>
        <begin position="434"/>
        <end position="444"/>
    </location>
</feature>
<feature type="compositionally biased region" description="Polar residues" evidence="4">
    <location>
        <begin position="455"/>
        <end position="464"/>
    </location>
</feature>
<feature type="compositionally biased region" description="Low complexity" evidence="4">
    <location>
        <begin position="465"/>
        <end position="477"/>
    </location>
</feature>
<feature type="compositionally biased region" description="Basic and acidic residues" evidence="4">
    <location>
        <begin position="507"/>
        <end position="518"/>
    </location>
</feature>
<feature type="compositionally biased region" description="Low complexity" evidence="4">
    <location>
        <begin position="522"/>
        <end position="535"/>
    </location>
</feature>
<feature type="compositionally biased region" description="Basic and acidic residues" evidence="4">
    <location>
        <begin position="540"/>
        <end position="566"/>
    </location>
</feature>
<feature type="compositionally biased region" description="Basic residues" evidence="4">
    <location>
        <begin position="613"/>
        <end position="629"/>
    </location>
</feature>
<feature type="compositionally biased region" description="Basic residues" evidence="4">
    <location>
        <begin position="637"/>
        <end position="647"/>
    </location>
</feature>
<feature type="compositionally biased region" description="Low complexity" evidence="4">
    <location>
        <begin position="654"/>
        <end position="669"/>
    </location>
</feature>
<feature type="compositionally biased region" description="Basic residues" evidence="4">
    <location>
        <begin position="721"/>
        <end position="730"/>
    </location>
</feature>
<feature type="compositionally biased region" description="Polar residues" evidence="4">
    <location>
        <begin position="731"/>
        <end position="747"/>
    </location>
</feature>
<feature type="compositionally biased region" description="Low complexity" evidence="4">
    <location>
        <begin position="770"/>
        <end position="780"/>
    </location>
</feature>
<feature type="compositionally biased region" description="Basic and acidic residues" evidence="4">
    <location>
        <begin position="815"/>
        <end position="837"/>
    </location>
</feature>
<feature type="compositionally biased region" description="Basic residues" evidence="4">
    <location>
        <begin position="851"/>
        <end position="860"/>
    </location>
</feature>
<feature type="compositionally biased region" description="Basic residues" evidence="4">
    <location>
        <begin position="877"/>
        <end position="894"/>
    </location>
</feature>
<feature type="compositionally biased region" description="Polar residues" evidence="4">
    <location>
        <begin position="992"/>
        <end position="1008"/>
    </location>
</feature>
<feature type="modified residue" description="Phosphoserine" evidence="9">
    <location>
        <position position="99"/>
    </location>
</feature>
<feature type="modified residue" description="Phosphoserine" evidence="2">
    <location>
        <position position="196"/>
    </location>
</feature>
<feature type="modified residue" description="Phosphoserine" evidence="2">
    <location>
        <position position="500"/>
    </location>
</feature>
<feature type="modified residue" description="Phosphoserine" evidence="2">
    <location>
        <position position="585"/>
    </location>
</feature>
<feature type="modified residue" description="Phosphoserine; by PLK1" evidence="2">
    <location>
        <position position="718"/>
    </location>
</feature>
<feature type="modified residue" description="Phosphoserine" evidence="2">
    <location>
        <position position="734"/>
    </location>
</feature>
<feature type="modified residue" description="Phosphoserine" evidence="9">
    <location>
        <position position="861"/>
    </location>
</feature>
<feature type="modified residue" description="Phosphoserine" evidence="9">
    <location>
        <position position="863"/>
    </location>
</feature>
<feature type="modified residue" description="Phosphoserine" evidence="9">
    <location>
        <position position="909"/>
    </location>
</feature>
<feature type="modified residue" description="Phosphoserine" evidence="9">
    <location>
        <position position="911"/>
    </location>
</feature>
<feature type="modified residue" description="Phosphoserine" evidence="9">
    <location>
        <position position="999"/>
    </location>
</feature>
<feature type="modified residue" description="Phosphoserine" evidence="8 9">
    <location>
        <position position="1016"/>
    </location>
</feature>
<feature type="modified residue" description="Phosphoserine" evidence="9">
    <location>
        <position position="1025"/>
    </location>
</feature>
<feature type="cross-link" description="Glycyl lysine isopeptide (Lys-Gly) (interchain with G-Cter in SUMO2)" evidence="2">
    <location>
        <position position="74"/>
    </location>
</feature>
<feature type="cross-link" description="Glycyl lysine isopeptide (Lys-Gly) (interchain with G-Cter in SUMO2)" evidence="2">
    <location>
        <position position="77"/>
    </location>
</feature>
<feature type="cross-link" description="Glycyl lysine isopeptide (Lys-Gly) (interchain with G-Cter in SUMO2)" evidence="2">
    <location>
        <position position="84"/>
    </location>
</feature>
<feature type="cross-link" description="Glycyl lysine isopeptide (Lys-Gly) (interchain with G-Cter in SUMO2)" evidence="2">
    <location>
        <position position="89"/>
    </location>
</feature>
<feature type="cross-link" description="Glycyl lysine isopeptide (Lys-Gly) (interchain with G-Cter in SUMO2)" evidence="2">
    <location>
        <position position="160"/>
    </location>
</feature>
<feature type="cross-link" description="Glycyl lysine isopeptide (Lys-Gly) (interchain with G-Cter in SUMO2)" evidence="2">
    <location>
        <position position="251"/>
    </location>
</feature>
<feature type="cross-link" description="Glycyl lysine isopeptide (Lys-Gly) (interchain with G-Cter in SUMO)" evidence="1">
    <location>
        <position position="561"/>
    </location>
</feature>
<feature type="cross-link" description="Glycyl lysine isopeptide (Lys-Gly) (interchain with G-Cter in SUMO2)" evidence="2">
    <location>
        <position position="701"/>
    </location>
</feature>
<feature type="cross-link" description="Glycyl lysine isopeptide (Lys-Gly) (interchain with G-Cter in SUMO2)" evidence="2">
    <location>
        <position position="818"/>
    </location>
</feature>
<feature type="cross-link" description="Glycyl lysine isopeptide (Lys-Gly) (interchain with G-Cter in SUMO2)" evidence="2">
    <location>
        <position position="834"/>
    </location>
</feature>
<feature type="sequence conflict" description="In Ref. 1; BAB69457." evidence="7" ref="1">
    <original>S</original>
    <variation>F</variation>
    <location>
        <position position="40"/>
    </location>
</feature>
<feature type="sequence conflict" description="In Ref. 3; AAH40797." evidence="7" ref="3">
    <original>L</original>
    <variation>P</variation>
    <location>
        <position position="623"/>
    </location>
</feature>
<feature type="sequence conflict" description="In Ref. 1; BAB69457." evidence="7" ref="1">
    <original>S</original>
    <variation>A</variation>
    <location>
        <position position="657"/>
    </location>
</feature>
<feature type="sequence conflict" description="In Ref. 3; AAH40797." evidence="7" ref="3">
    <original>S</original>
    <variation>A</variation>
    <location>
        <position position="682"/>
    </location>
</feature>
<reference key="1">
    <citation type="journal article" date="2005" name="Int. J. Oncol.">
        <title>DJ-1 restores p53 transcription activity inhibited by Topors/p53BP3.</title>
        <authorList>
            <person name="Shinbo Y."/>
            <person name="Taira T."/>
            <person name="Niki T."/>
            <person name="Iguchi-Ariga S.M.M."/>
            <person name="Ariga H."/>
        </authorList>
    </citation>
    <scope>NUCLEOTIDE SEQUENCE [MRNA]</scope>
    <scope>FUNCTION</scope>
    <scope>INTERACTION WITH PARK7 AND TP53</scope>
    <scope>SUBCELLULAR LOCATION</scope>
    <source>
        <strain>C57BL/6J</strain>
    </source>
</reference>
<reference key="2">
    <citation type="journal article" date="2005" name="Oncogene">
        <title>Topors, a p53 and topoisomerase I-binding RING finger protein, is a coactivator of p53 in growth suppression induced by DNA damage.</title>
        <authorList>
            <person name="Lin L."/>
            <person name="Ozaki T."/>
            <person name="Takada Y."/>
            <person name="Kageyama H."/>
            <person name="Nakamura Y."/>
            <person name="Hata A."/>
            <person name="Zhang J.H."/>
            <person name="Simonds W.F."/>
            <person name="Nakagawara A."/>
            <person name="Koseki H."/>
        </authorList>
    </citation>
    <scope>NUCLEOTIDE SEQUENCE [MRNA]</scope>
    <scope>FUNCTION</scope>
    <scope>INTERACTION WITH TP53</scope>
    <scope>SUBCELLULAR LOCATION</scope>
    <scope>INDUCTION</scope>
</reference>
<reference key="3">
    <citation type="journal article" date="2004" name="Genome Res.">
        <title>The status, quality, and expansion of the NIH full-length cDNA project: the Mammalian Gene Collection (MGC).</title>
        <authorList>
            <consortium name="The MGC Project Team"/>
        </authorList>
    </citation>
    <scope>NUCLEOTIDE SEQUENCE [LARGE SCALE MRNA]</scope>
    <source>
        <tissue>Mammary gland</tissue>
        <tissue>Mammary tumor</tissue>
    </source>
</reference>
<reference key="4">
    <citation type="journal article" date="2005" name="Science">
        <title>The transcriptional landscape of the mammalian genome.</title>
        <authorList>
            <person name="Carninci P."/>
            <person name="Kasukawa T."/>
            <person name="Katayama S."/>
            <person name="Gough J."/>
            <person name="Frith M.C."/>
            <person name="Maeda N."/>
            <person name="Oyama R."/>
            <person name="Ravasi T."/>
            <person name="Lenhard B."/>
            <person name="Wells C."/>
            <person name="Kodzius R."/>
            <person name="Shimokawa K."/>
            <person name="Bajic V.B."/>
            <person name="Brenner S.E."/>
            <person name="Batalov S."/>
            <person name="Forrest A.R."/>
            <person name="Zavolan M."/>
            <person name="Davis M.J."/>
            <person name="Wilming L.G."/>
            <person name="Aidinis V."/>
            <person name="Allen J.E."/>
            <person name="Ambesi-Impiombato A."/>
            <person name="Apweiler R."/>
            <person name="Aturaliya R.N."/>
            <person name="Bailey T.L."/>
            <person name="Bansal M."/>
            <person name="Baxter L."/>
            <person name="Beisel K.W."/>
            <person name="Bersano T."/>
            <person name="Bono H."/>
            <person name="Chalk A.M."/>
            <person name="Chiu K.P."/>
            <person name="Choudhary V."/>
            <person name="Christoffels A."/>
            <person name="Clutterbuck D.R."/>
            <person name="Crowe M.L."/>
            <person name="Dalla E."/>
            <person name="Dalrymple B.P."/>
            <person name="de Bono B."/>
            <person name="Della Gatta G."/>
            <person name="di Bernardo D."/>
            <person name="Down T."/>
            <person name="Engstrom P."/>
            <person name="Fagiolini M."/>
            <person name="Faulkner G."/>
            <person name="Fletcher C.F."/>
            <person name="Fukushima T."/>
            <person name="Furuno M."/>
            <person name="Futaki S."/>
            <person name="Gariboldi M."/>
            <person name="Georgii-Hemming P."/>
            <person name="Gingeras T.R."/>
            <person name="Gojobori T."/>
            <person name="Green R.E."/>
            <person name="Gustincich S."/>
            <person name="Harbers M."/>
            <person name="Hayashi Y."/>
            <person name="Hensch T.K."/>
            <person name="Hirokawa N."/>
            <person name="Hill D."/>
            <person name="Huminiecki L."/>
            <person name="Iacono M."/>
            <person name="Ikeo K."/>
            <person name="Iwama A."/>
            <person name="Ishikawa T."/>
            <person name="Jakt M."/>
            <person name="Kanapin A."/>
            <person name="Katoh M."/>
            <person name="Kawasawa Y."/>
            <person name="Kelso J."/>
            <person name="Kitamura H."/>
            <person name="Kitano H."/>
            <person name="Kollias G."/>
            <person name="Krishnan S.P."/>
            <person name="Kruger A."/>
            <person name="Kummerfeld S.K."/>
            <person name="Kurochkin I.V."/>
            <person name="Lareau L.F."/>
            <person name="Lazarevic D."/>
            <person name="Lipovich L."/>
            <person name="Liu J."/>
            <person name="Liuni S."/>
            <person name="McWilliam S."/>
            <person name="Madan Babu M."/>
            <person name="Madera M."/>
            <person name="Marchionni L."/>
            <person name="Matsuda H."/>
            <person name="Matsuzawa S."/>
            <person name="Miki H."/>
            <person name="Mignone F."/>
            <person name="Miyake S."/>
            <person name="Morris K."/>
            <person name="Mottagui-Tabar S."/>
            <person name="Mulder N."/>
            <person name="Nakano N."/>
            <person name="Nakauchi H."/>
            <person name="Ng P."/>
            <person name="Nilsson R."/>
            <person name="Nishiguchi S."/>
            <person name="Nishikawa S."/>
            <person name="Nori F."/>
            <person name="Ohara O."/>
            <person name="Okazaki Y."/>
            <person name="Orlando V."/>
            <person name="Pang K.C."/>
            <person name="Pavan W.J."/>
            <person name="Pavesi G."/>
            <person name="Pesole G."/>
            <person name="Petrovsky N."/>
            <person name="Piazza S."/>
            <person name="Reed J."/>
            <person name="Reid J.F."/>
            <person name="Ring B.Z."/>
            <person name="Ringwald M."/>
            <person name="Rost B."/>
            <person name="Ruan Y."/>
            <person name="Salzberg S.L."/>
            <person name="Sandelin A."/>
            <person name="Schneider C."/>
            <person name="Schoenbach C."/>
            <person name="Sekiguchi K."/>
            <person name="Semple C.A."/>
            <person name="Seno S."/>
            <person name="Sessa L."/>
            <person name="Sheng Y."/>
            <person name="Shibata Y."/>
            <person name="Shimada H."/>
            <person name="Shimada K."/>
            <person name="Silva D."/>
            <person name="Sinclair B."/>
            <person name="Sperling S."/>
            <person name="Stupka E."/>
            <person name="Sugiura K."/>
            <person name="Sultana R."/>
            <person name="Takenaka Y."/>
            <person name="Taki K."/>
            <person name="Tammoja K."/>
            <person name="Tan S.L."/>
            <person name="Tang S."/>
            <person name="Taylor M.S."/>
            <person name="Tegner J."/>
            <person name="Teichmann S.A."/>
            <person name="Ueda H.R."/>
            <person name="van Nimwegen E."/>
            <person name="Verardo R."/>
            <person name="Wei C.L."/>
            <person name="Yagi K."/>
            <person name="Yamanishi H."/>
            <person name="Zabarovsky E."/>
            <person name="Zhu S."/>
            <person name="Zimmer A."/>
            <person name="Hide W."/>
            <person name="Bult C."/>
            <person name="Grimmond S.M."/>
            <person name="Teasdale R.D."/>
            <person name="Liu E.T."/>
            <person name="Brusic V."/>
            <person name="Quackenbush J."/>
            <person name="Wahlestedt C."/>
            <person name="Mattick J.S."/>
            <person name="Hume D.A."/>
            <person name="Kai C."/>
            <person name="Sasaki D."/>
            <person name="Tomaru Y."/>
            <person name="Fukuda S."/>
            <person name="Kanamori-Katayama M."/>
            <person name="Suzuki M."/>
            <person name="Aoki J."/>
            <person name="Arakawa T."/>
            <person name="Iida J."/>
            <person name="Imamura K."/>
            <person name="Itoh M."/>
            <person name="Kato T."/>
            <person name="Kawaji H."/>
            <person name="Kawagashira N."/>
            <person name="Kawashima T."/>
            <person name="Kojima M."/>
            <person name="Kondo S."/>
            <person name="Konno H."/>
            <person name="Nakano K."/>
            <person name="Ninomiya N."/>
            <person name="Nishio T."/>
            <person name="Okada M."/>
            <person name="Plessy C."/>
            <person name="Shibata K."/>
            <person name="Shiraki T."/>
            <person name="Suzuki S."/>
            <person name="Tagami M."/>
            <person name="Waki K."/>
            <person name="Watahiki A."/>
            <person name="Okamura-Oho Y."/>
            <person name="Suzuki H."/>
            <person name="Kawai J."/>
            <person name="Hayashizaki Y."/>
        </authorList>
    </citation>
    <scope>NUCLEOTIDE SEQUENCE [LARGE SCALE MRNA] OF 1-824</scope>
    <source>
        <strain>C57BL/6J</strain>
        <tissue>Corpora quadrigemina</tissue>
        <tissue>Lung</tissue>
        <tissue>Retina</tissue>
        <tissue>Thymus</tissue>
    </source>
</reference>
<reference key="5">
    <citation type="journal article" date="2007" name="Proc. Natl. Acad. Sci. U.S.A.">
        <title>Large-scale phosphorylation analysis of mouse liver.</title>
        <authorList>
            <person name="Villen J."/>
            <person name="Beausoleil S.A."/>
            <person name="Gerber S.A."/>
            <person name="Gygi S.P."/>
        </authorList>
    </citation>
    <scope>PHOSPHORYLATION [LARGE SCALE ANALYSIS] AT SER-1016</scope>
    <scope>IDENTIFICATION BY MASS SPECTROMETRY [LARGE SCALE ANALYSIS]</scope>
    <source>
        <tissue>Liver</tissue>
    </source>
</reference>
<reference key="6">
    <citation type="journal article" date="2010" name="Cell">
        <title>A tissue-specific atlas of mouse protein phosphorylation and expression.</title>
        <authorList>
            <person name="Huttlin E.L."/>
            <person name="Jedrychowski M.P."/>
            <person name="Elias J.E."/>
            <person name="Goswami T."/>
            <person name="Rad R."/>
            <person name="Beausoleil S.A."/>
            <person name="Villen J."/>
            <person name="Haas W."/>
            <person name="Sowa M.E."/>
            <person name="Gygi S.P."/>
        </authorList>
    </citation>
    <scope>PHOSPHORYLATION [LARGE SCALE ANALYSIS] AT SER-99; SER-861; SER-863; SER-909; SER-911; SER-999; SER-1016 AND SER-1025</scope>
    <scope>IDENTIFICATION BY MASS SPECTROMETRY [LARGE SCALE ANALYSIS]</scope>
    <source>
        <tissue>Kidney</tissue>
        <tissue>Liver</tissue>
        <tissue>Lung</tissue>
        <tissue>Spleen</tissue>
        <tissue>Testis</tissue>
    </source>
</reference>
<comment type="function">
    <text evidence="5 6">Functions as an E3 ubiquitin-protein ligase and as a E3 SUMO1-protein ligase. Probable tumor suppressor involved in cell growth, cell proliferation and apoptosis that regulates p53/TP53 stability through ubiquitin-dependent degradation. May regulate chromatin modification through sumoylation of several chromatin modification-associated proteins. May be involved in DNA-damage-induced cell death through IKBKE sumoylation.</text>
</comment>
<comment type="catalytic activity">
    <reaction>
        <text>S-ubiquitinyl-[E2 ubiquitin-conjugating enzyme]-L-cysteine + [acceptor protein]-L-lysine = [E2 ubiquitin-conjugating enzyme]-L-cysteine + N(6)-ubiquitinyl-[acceptor protein]-L-lysine.</text>
        <dbReference type="EC" id="2.3.2.27"/>
    </reaction>
</comment>
<comment type="subunit">
    <text evidence="2 5 6">Interacts with TOP1. Interacts with the SUMO1 conjugating enzyme UBE2I. Interacts with SUMO1. Interacts with NKX3-1; polyubiquitinates NKX3-1 and induces its proteasomal degradation. Interacts with SIN3A; sumoylates SIN3A. Interacts with IKBKE; induced by DNA damage (By similarity). Interacts with p53/TP53. Interacts with PARK7/DJ-1.</text>
</comment>
<comment type="subcellular location">
    <subcellularLocation>
        <location evidence="5 6">Nucleus</location>
    </subcellularLocation>
    <subcellularLocation>
        <location evidence="2">Nucleus</location>
        <location evidence="2">PML body</location>
    </subcellularLocation>
    <text evidence="2">Localizes to discrete nuclear foci which partly overlap with PML nuclear bodies. Targeted to PML nuclear bodies upon DNA damage.</text>
</comment>
<comment type="induction">
    <text evidence="6">By genotoxic agents such as cisplatin and camptothecin.</text>
</comment>
<comment type="PTM">
    <text evidence="2">Phosphorylation at Ser-99 regulates the E3 ubiquitin-protein ligase activity but not the SUMO1-protein ligase activity. Phosphorylation at Ser-718 increases the E3 ubiquitin-protein ligase activity versus the E3 SUMO1-protein ligase activity resulting in increased p53/TP53 ubiquitination and degradation.</text>
</comment>
<comment type="PTM">
    <text evidence="2">Sumoylated.</text>
</comment>
<comment type="sequence caution" evidence="7">
    <conflict type="miscellaneous discrepancy">
        <sequence resource="EMBL-CDS" id="AAH37141"/>
    </conflict>
    <text>Contaminating sequence. Potential poly-A sequence.</text>
</comment>
<dbReference type="EC" id="2.3.2.27"/>
<dbReference type="EMBL" id="AB072395">
    <property type="protein sequence ID" value="BAB69457.1"/>
    <property type="molecule type" value="mRNA"/>
</dbReference>
<dbReference type="EMBL" id="AB104865">
    <property type="protein sequence ID" value="BAC65157.1"/>
    <property type="molecule type" value="mRNA"/>
</dbReference>
<dbReference type="EMBL" id="BC037141">
    <property type="protein sequence ID" value="AAH37141.1"/>
    <property type="status" value="ALT_SEQ"/>
    <property type="molecule type" value="mRNA"/>
</dbReference>
<dbReference type="EMBL" id="BC040797">
    <property type="protein sequence ID" value="AAH40797.1"/>
    <property type="molecule type" value="mRNA"/>
</dbReference>
<dbReference type="EMBL" id="AK044564">
    <property type="protein sequence ID" value="BAC31981.2"/>
    <property type="molecule type" value="mRNA"/>
</dbReference>
<dbReference type="EMBL" id="AK134075">
    <property type="protein sequence ID" value="BAE22003.1"/>
    <property type="molecule type" value="mRNA"/>
</dbReference>
<dbReference type="EMBL" id="AK140250">
    <property type="protein sequence ID" value="BAE24298.1"/>
    <property type="molecule type" value="mRNA"/>
</dbReference>
<dbReference type="EMBL" id="AK143025">
    <property type="protein sequence ID" value="BAE25253.1"/>
    <property type="molecule type" value="mRNA"/>
</dbReference>
<dbReference type="EMBL" id="AK153743">
    <property type="protein sequence ID" value="BAE32164.1"/>
    <property type="molecule type" value="mRNA"/>
</dbReference>
<dbReference type="CCDS" id="CCDS38710.1"/>
<dbReference type="RefSeq" id="NP_598858.2">
    <property type="nucleotide sequence ID" value="NM_134097.3"/>
</dbReference>
<dbReference type="SMR" id="Q80Z37"/>
<dbReference type="BioGRID" id="222976">
    <property type="interactions" value="8"/>
</dbReference>
<dbReference type="FunCoup" id="Q80Z37">
    <property type="interactions" value="2484"/>
</dbReference>
<dbReference type="IntAct" id="Q80Z37">
    <property type="interactions" value="1"/>
</dbReference>
<dbReference type="MINT" id="Q80Z37"/>
<dbReference type="STRING" id="10090.ENSMUSP00000046843"/>
<dbReference type="GlyGen" id="Q80Z37">
    <property type="glycosylation" value="1 site, 1 O-linked glycan (1 site)"/>
</dbReference>
<dbReference type="iPTMnet" id="Q80Z37"/>
<dbReference type="PhosphoSitePlus" id="Q80Z37"/>
<dbReference type="jPOST" id="Q80Z37"/>
<dbReference type="PaxDb" id="10090-ENSMUSP00000046843"/>
<dbReference type="PeptideAtlas" id="Q80Z37"/>
<dbReference type="ProteomicsDB" id="259290"/>
<dbReference type="Antibodypedia" id="25068">
    <property type="antibodies" value="220 antibodies from 25 providers"/>
</dbReference>
<dbReference type="DNASU" id="106021"/>
<dbReference type="Ensembl" id="ENSMUST00000042575.7">
    <property type="protein sequence ID" value="ENSMUSP00000046843.7"/>
    <property type="gene ID" value="ENSMUSG00000036822.7"/>
</dbReference>
<dbReference type="GeneID" id="106021"/>
<dbReference type="KEGG" id="mmu:106021"/>
<dbReference type="UCSC" id="uc008shi.1">
    <property type="organism name" value="mouse"/>
</dbReference>
<dbReference type="AGR" id="MGI:2146189"/>
<dbReference type="CTD" id="10210"/>
<dbReference type="MGI" id="MGI:2146189">
    <property type="gene designation" value="Topors"/>
</dbReference>
<dbReference type="VEuPathDB" id="HostDB:ENSMUSG00000036822"/>
<dbReference type="eggNOG" id="KOG4430">
    <property type="taxonomic scope" value="Eukaryota"/>
</dbReference>
<dbReference type="GeneTree" id="ENSGT00530000064170"/>
<dbReference type="HOGENOM" id="CLU_012046_0_0_1"/>
<dbReference type="InParanoid" id="Q80Z37"/>
<dbReference type="OMA" id="DCVIVGF"/>
<dbReference type="OrthoDB" id="21204at2759"/>
<dbReference type="PhylomeDB" id="Q80Z37"/>
<dbReference type="TreeFam" id="TF339497"/>
<dbReference type="Reactome" id="R-MMU-3899300">
    <property type="pathway name" value="SUMOylation of transcription cofactors"/>
</dbReference>
<dbReference type="Reactome" id="R-MMU-4085377">
    <property type="pathway name" value="SUMOylation of SUMOylation proteins"/>
</dbReference>
<dbReference type="Reactome" id="R-MMU-4755510">
    <property type="pathway name" value="SUMOylation of immune response proteins"/>
</dbReference>
<dbReference type="BioGRID-ORCS" id="106021">
    <property type="hits" value="8 hits in 76 CRISPR screens"/>
</dbReference>
<dbReference type="CD-CODE" id="2E092FC3">
    <property type="entry name" value="PML body"/>
</dbReference>
<dbReference type="ChiTaRS" id="Topors">
    <property type="organism name" value="mouse"/>
</dbReference>
<dbReference type="PRO" id="PR:Q80Z37"/>
<dbReference type="Proteomes" id="UP000000589">
    <property type="component" value="Chromosome 4"/>
</dbReference>
<dbReference type="RNAct" id="Q80Z37">
    <property type="molecule type" value="protein"/>
</dbReference>
<dbReference type="Bgee" id="ENSMUSG00000036822">
    <property type="expression patterns" value="Expressed in primitive streak and 249 other cell types or tissues"/>
</dbReference>
<dbReference type="GO" id="GO:0005814">
    <property type="term" value="C:centriole"/>
    <property type="evidence" value="ECO:0007669"/>
    <property type="project" value="Ensembl"/>
</dbReference>
<dbReference type="GO" id="GO:0036064">
    <property type="term" value="C:ciliary basal body"/>
    <property type="evidence" value="ECO:0000314"/>
    <property type="project" value="BHF-UCL"/>
</dbReference>
<dbReference type="GO" id="GO:0000930">
    <property type="term" value="C:gamma-tubulin complex"/>
    <property type="evidence" value="ECO:0007669"/>
    <property type="project" value="Ensembl"/>
</dbReference>
<dbReference type="GO" id="GO:0016607">
    <property type="term" value="C:nuclear speck"/>
    <property type="evidence" value="ECO:0000250"/>
    <property type="project" value="UniProtKB"/>
</dbReference>
<dbReference type="GO" id="GO:0005634">
    <property type="term" value="C:nucleus"/>
    <property type="evidence" value="ECO:0000314"/>
    <property type="project" value="BHF-UCL"/>
</dbReference>
<dbReference type="GO" id="GO:0032391">
    <property type="term" value="C:photoreceptor connecting cilium"/>
    <property type="evidence" value="ECO:0000314"/>
    <property type="project" value="BHF-UCL"/>
</dbReference>
<dbReference type="GO" id="GO:0016605">
    <property type="term" value="C:PML body"/>
    <property type="evidence" value="ECO:0000250"/>
    <property type="project" value="UniProtKB"/>
</dbReference>
<dbReference type="GO" id="GO:0000922">
    <property type="term" value="C:spindle pole"/>
    <property type="evidence" value="ECO:0007669"/>
    <property type="project" value="Ensembl"/>
</dbReference>
<dbReference type="GO" id="GO:0000151">
    <property type="term" value="C:ubiquitin ligase complex"/>
    <property type="evidence" value="ECO:0007669"/>
    <property type="project" value="Ensembl"/>
</dbReference>
<dbReference type="GO" id="GO:0003823">
    <property type="term" value="F:antigen binding"/>
    <property type="evidence" value="ECO:0007669"/>
    <property type="project" value="Ensembl"/>
</dbReference>
<dbReference type="GO" id="GO:0003677">
    <property type="term" value="F:DNA binding"/>
    <property type="evidence" value="ECO:0007669"/>
    <property type="project" value="Ensembl"/>
</dbReference>
<dbReference type="GO" id="GO:0044547">
    <property type="term" value="F:DNA topoisomerase binding"/>
    <property type="evidence" value="ECO:0007669"/>
    <property type="project" value="Ensembl"/>
</dbReference>
<dbReference type="GO" id="GO:0019789">
    <property type="term" value="F:SUMO transferase activity"/>
    <property type="evidence" value="ECO:0000250"/>
    <property type="project" value="UniProtKB"/>
</dbReference>
<dbReference type="GO" id="GO:0061630">
    <property type="term" value="F:ubiquitin protein ligase activity"/>
    <property type="evidence" value="ECO:0007669"/>
    <property type="project" value="Ensembl"/>
</dbReference>
<dbReference type="GO" id="GO:0004842">
    <property type="term" value="F:ubiquitin-protein transferase activity"/>
    <property type="evidence" value="ECO:0000250"/>
    <property type="project" value="UniProtKB"/>
</dbReference>
<dbReference type="GO" id="GO:0008270">
    <property type="term" value="F:zinc ion binding"/>
    <property type="evidence" value="ECO:0007669"/>
    <property type="project" value="UniProtKB-KW"/>
</dbReference>
<dbReference type="GO" id="GO:0006974">
    <property type="term" value="P:DNA damage response"/>
    <property type="evidence" value="ECO:0000314"/>
    <property type="project" value="MGI"/>
</dbReference>
<dbReference type="GO" id="GO:0008630">
    <property type="term" value="P:intrinsic apoptotic signaling pathway in response to DNA damage"/>
    <property type="evidence" value="ECO:0000250"/>
    <property type="project" value="UniProtKB"/>
</dbReference>
<dbReference type="GO" id="GO:0042771">
    <property type="term" value="P:intrinsic apoptotic signaling pathway in response to DNA damage by p53 class mediator"/>
    <property type="evidence" value="ECO:0000314"/>
    <property type="project" value="MGI"/>
</dbReference>
<dbReference type="GO" id="GO:0051457">
    <property type="term" value="P:maintenance of protein location in nucleus"/>
    <property type="evidence" value="ECO:0007669"/>
    <property type="project" value="Ensembl"/>
</dbReference>
<dbReference type="GO" id="GO:0045893">
    <property type="term" value="P:positive regulation of DNA-templated transcription"/>
    <property type="evidence" value="ECO:0000316"/>
    <property type="project" value="MGI"/>
</dbReference>
<dbReference type="GO" id="GO:0043161">
    <property type="term" value="P:proteasome-mediated ubiquitin-dependent protein catabolic process"/>
    <property type="evidence" value="ECO:0000250"/>
    <property type="project" value="UniProtKB"/>
</dbReference>
<dbReference type="GO" id="GO:0070936">
    <property type="term" value="P:protein K48-linked ubiquitination"/>
    <property type="evidence" value="ECO:0007669"/>
    <property type="project" value="Ensembl"/>
</dbReference>
<dbReference type="GO" id="GO:0034504">
    <property type="term" value="P:protein localization to nucleus"/>
    <property type="evidence" value="ECO:0000250"/>
    <property type="project" value="UniProtKB"/>
</dbReference>
<dbReference type="GO" id="GO:0006513">
    <property type="term" value="P:protein monoubiquitination"/>
    <property type="evidence" value="ECO:0007669"/>
    <property type="project" value="Ensembl"/>
</dbReference>
<dbReference type="GO" id="GO:0016925">
    <property type="term" value="P:protein sumoylation"/>
    <property type="evidence" value="ECO:0000250"/>
    <property type="project" value="UniProtKB"/>
</dbReference>
<dbReference type="GO" id="GO:0042127">
    <property type="term" value="P:regulation of cell population proliferation"/>
    <property type="evidence" value="ECO:0000314"/>
    <property type="project" value="MGI"/>
</dbReference>
<dbReference type="GO" id="GO:0006511">
    <property type="term" value="P:ubiquitin-dependent protein catabolic process"/>
    <property type="evidence" value="ECO:0000250"/>
    <property type="project" value="UniProtKB"/>
</dbReference>
<dbReference type="CDD" id="cd16574">
    <property type="entry name" value="RING-HC_Topors"/>
    <property type="match status" value="1"/>
</dbReference>
<dbReference type="FunFam" id="3.30.40.10:FF:000136">
    <property type="entry name" value="E3 ubiquitin-protein ligase Topors"/>
    <property type="match status" value="1"/>
</dbReference>
<dbReference type="Gene3D" id="3.30.40.10">
    <property type="entry name" value="Zinc/RING finger domain, C3HC4 (zinc finger)"/>
    <property type="match status" value="1"/>
</dbReference>
<dbReference type="InterPro" id="IPR018957">
    <property type="entry name" value="Znf_C3HC4_RING-type"/>
</dbReference>
<dbReference type="InterPro" id="IPR001841">
    <property type="entry name" value="Znf_RING"/>
</dbReference>
<dbReference type="InterPro" id="IPR013083">
    <property type="entry name" value="Znf_RING/FYVE/PHD"/>
</dbReference>
<dbReference type="InterPro" id="IPR017907">
    <property type="entry name" value="Znf_RING_CS"/>
</dbReference>
<dbReference type="PANTHER" id="PTHR46077">
    <property type="entry name" value="E3 UBIQUITIN-PROTEIN LIGASE TOPORS"/>
    <property type="match status" value="1"/>
</dbReference>
<dbReference type="PANTHER" id="PTHR46077:SF2">
    <property type="entry name" value="E3 UBIQUITIN-PROTEIN LIGASE TOPORS"/>
    <property type="match status" value="1"/>
</dbReference>
<dbReference type="Pfam" id="PF00097">
    <property type="entry name" value="zf-C3HC4"/>
    <property type="match status" value="1"/>
</dbReference>
<dbReference type="SMART" id="SM00184">
    <property type="entry name" value="RING"/>
    <property type="match status" value="1"/>
</dbReference>
<dbReference type="SUPFAM" id="SSF57850">
    <property type="entry name" value="RING/U-box"/>
    <property type="match status" value="1"/>
</dbReference>
<dbReference type="PROSITE" id="PS00518">
    <property type="entry name" value="ZF_RING_1"/>
    <property type="match status" value="1"/>
</dbReference>
<dbReference type="PROSITE" id="PS50089">
    <property type="entry name" value="ZF_RING_2"/>
    <property type="match status" value="1"/>
</dbReference>
<protein>
    <recommendedName>
        <fullName>E3 ubiquitin-protein ligase Topors</fullName>
        <ecNumber>2.3.2.27</ecNumber>
    </recommendedName>
    <alternativeName>
        <fullName evidence="7">RING-type E3 ubiquitin transferase Topors</fullName>
    </alternativeName>
    <alternativeName>
        <fullName>SUMO1-protein E3 ligase Topors</fullName>
    </alternativeName>
    <alternativeName>
        <fullName>Topoisomerase I-binding RING finger protein</fullName>
    </alternativeName>
    <alternativeName>
        <fullName>Topoisomerase I-binding arginine/serine-rich protein</fullName>
    </alternativeName>
    <alternativeName>
        <fullName>Tumor suppressor p53-binding protein 3</fullName>
        <shortName>p53-binding protein 3</shortName>
        <shortName>p53BP3</shortName>
    </alternativeName>
</protein>
<organism>
    <name type="scientific">Mus musculus</name>
    <name type="common">Mouse</name>
    <dbReference type="NCBI Taxonomy" id="10090"/>
    <lineage>
        <taxon>Eukaryota</taxon>
        <taxon>Metazoa</taxon>
        <taxon>Chordata</taxon>
        <taxon>Craniata</taxon>
        <taxon>Vertebrata</taxon>
        <taxon>Euteleostomi</taxon>
        <taxon>Mammalia</taxon>
        <taxon>Eutheria</taxon>
        <taxon>Euarchontoglires</taxon>
        <taxon>Glires</taxon>
        <taxon>Rodentia</taxon>
        <taxon>Myomorpha</taxon>
        <taxon>Muroidea</taxon>
        <taxon>Muridae</taxon>
        <taxon>Murinae</taxon>
        <taxon>Mus</taxon>
        <taxon>Mus</taxon>
    </lineage>
</organism>
<accession>Q80Z37</accession>
<accession>Q3U5B5</accession>
<accession>Q3UPZ1</accession>
<accession>Q3USN3</accession>
<accession>Q3UZ55</accession>
<accession>Q8BXP2</accession>
<accession>Q8CFF5</accession>
<accession>Q8CGC8</accession>
<accession>Q920L3</accession>
<gene>
    <name type="primary">Topors</name>
</gene>